<feature type="chain" id="PRO_1000055150" description="ATP synthase subunit beta">
    <location>
        <begin position="1"/>
        <end position="476"/>
    </location>
</feature>
<feature type="binding site" evidence="1">
    <location>
        <begin position="154"/>
        <end position="161"/>
    </location>
    <ligand>
        <name>ATP</name>
        <dbReference type="ChEBI" id="CHEBI:30616"/>
    </ligand>
</feature>
<keyword id="KW-0066">ATP synthesis</keyword>
<keyword id="KW-0067">ATP-binding</keyword>
<keyword id="KW-0997">Cell inner membrane</keyword>
<keyword id="KW-1003">Cell membrane</keyword>
<keyword id="KW-0139">CF(1)</keyword>
<keyword id="KW-0375">Hydrogen ion transport</keyword>
<keyword id="KW-0406">Ion transport</keyword>
<keyword id="KW-0472">Membrane</keyword>
<keyword id="KW-0547">Nucleotide-binding</keyword>
<keyword id="KW-1278">Translocase</keyword>
<keyword id="KW-0813">Transport</keyword>
<protein>
    <recommendedName>
        <fullName evidence="1">ATP synthase subunit beta</fullName>
        <ecNumber evidence="1">7.1.2.2</ecNumber>
    </recommendedName>
    <alternativeName>
        <fullName evidence="1">ATP synthase F1 sector subunit beta</fullName>
    </alternativeName>
    <alternativeName>
        <fullName evidence="1">F-ATPase subunit beta</fullName>
    </alternativeName>
</protein>
<accession>Q07UZ5</accession>
<gene>
    <name evidence="1" type="primary">atpD</name>
    <name type="ordered locus">RPE_0280</name>
</gene>
<sequence length="476" mass="50842">MATPANQNGRITQVIGAVVDVQFEGHLPAILNAIETKNGNNRLVLEVAQHLGESTVRTIAMDTTEGLVRGQEVTDTGSPIMVPVGLGTLGRIMNVIGEPVDEQGPVANEGLRPIHAEAPLYTDQSTEAEILVTGIKVVDLLAPYAKGGKIGLFGGAGVGKTVLIQELINNVAKAHGGYSVFAGVGERTREGNDLYHEFIESGVNKKGGGEGSKCALVYGQMNEPPGARARVALSGLTVAEHFRDQGQDVLFFVDNIFRFTQAGSEVSALLGRIPSAVGYQPTLATDMGALQERITTTHKGSITSVQAIYVPADDLTDPAPATSFAHLDATTVLNRAISEKGIYPAVDPLDSTSRMLSPLIVGEEHYQTARMVQQVLQKYKSLQDIIAILGMDELSEEDKIAVARARKIERFLSQPFFVAEIFTGSPGKFVDLADTIKGFRAICEGKYDHLPEAAFYMVGTIEEAVEKGKKLAAEAA</sequence>
<comment type="function">
    <text evidence="1">Produces ATP from ADP in the presence of a proton gradient across the membrane. The catalytic sites are hosted primarily by the beta subunits.</text>
</comment>
<comment type="catalytic activity">
    <reaction evidence="1">
        <text>ATP + H2O + 4 H(+)(in) = ADP + phosphate + 5 H(+)(out)</text>
        <dbReference type="Rhea" id="RHEA:57720"/>
        <dbReference type="ChEBI" id="CHEBI:15377"/>
        <dbReference type="ChEBI" id="CHEBI:15378"/>
        <dbReference type="ChEBI" id="CHEBI:30616"/>
        <dbReference type="ChEBI" id="CHEBI:43474"/>
        <dbReference type="ChEBI" id="CHEBI:456216"/>
        <dbReference type="EC" id="7.1.2.2"/>
    </reaction>
</comment>
<comment type="subunit">
    <text evidence="1">F-type ATPases have 2 components, CF(1) - the catalytic core - and CF(0) - the membrane proton channel. CF(1) has five subunits: alpha(3), beta(3), gamma(1), delta(1), epsilon(1). CF(0) has four main subunits: a(1), b(1), b'(1) and c(9-12).</text>
</comment>
<comment type="subcellular location">
    <subcellularLocation>
        <location evidence="1">Cell inner membrane</location>
        <topology evidence="1">Peripheral membrane protein</topology>
    </subcellularLocation>
</comment>
<comment type="similarity">
    <text evidence="1">Belongs to the ATPase alpha/beta chains family.</text>
</comment>
<reference key="1">
    <citation type="submission" date="2006-09" db="EMBL/GenBank/DDBJ databases">
        <title>Complete sequence of Rhodopseudomonas palustris BisA53.</title>
        <authorList>
            <consortium name="US DOE Joint Genome Institute"/>
            <person name="Copeland A."/>
            <person name="Lucas S."/>
            <person name="Lapidus A."/>
            <person name="Barry K."/>
            <person name="Detter J.C."/>
            <person name="Glavina del Rio T."/>
            <person name="Hammon N."/>
            <person name="Israni S."/>
            <person name="Dalin E."/>
            <person name="Tice H."/>
            <person name="Pitluck S."/>
            <person name="Chain P."/>
            <person name="Malfatti S."/>
            <person name="Shin M."/>
            <person name="Vergez L."/>
            <person name="Schmutz J."/>
            <person name="Larimer F."/>
            <person name="Land M."/>
            <person name="Hauser L."/>
            <person name="Pelletier D.A."/>
            <person name="Kyrpides N."/>
            <person name="Kim E."/>
            <person name="Harwood C.S."/>
            <person name="Oda Y."/>
            <person name="Richardson P."/>
        </authorList>
    </citation>
    <scope>NUCLEOTIDE SEQUENCE [LARGE SCALE GENOMIC DNA]</scope>
    <source>
        <strain>BisA53</strain>
    </source>
</reference>
<proteinExistence type="inferred from homology"/>
<name>ATPB_RHOP5</name>
<dbReference type="EC" id="7.1.2.2" evidence="1"/>
<dbReference type="EMBL" id="CP000463">
    <property type="protein sequence ID" value="ABJ04239.1"/>
    <property type="molecule type" value="Genomic_DNA"/>
</dbReference>
<dbReference type="SMR" id="Q07UZ5"/>
<dbReference type="STRING" id="316055.RPE_0280"/>
<dbReference type="KEGG" id="rpe:RPE_0280"/>
<dbReference type="eggNOG" id="COG0055">
    <property type="taxonomic scope" value="Bacteria"/>
</dbReference>
<dbReference type="HOGENOM" id="CLU_022398_0_2_5"/>
<dbReference type="OrthoDB" id="9801639at2"/>
<dbReference type="GO" id="GO:0005886">
    <property type="term" value="C:plasma membrane"/>
    <property type="evidence" value="ECO:0007669"/>
    <property type="project" value="UniProtKB-SubCell"/>
</dbReference>
<dbReference type="GO" id="GO:0045259">
    <property type="term" value="C:proton-transporting ATP synthase complex"/>
    <property type="evidence" value="ECO:0007669"/>
    <property type="project" value="UniProtKB-KW"/>
</dbReference>
<dbReference type="GO" id="GO:0005524">
    <property type="term" value="F:ATP binding"/>
    <property type="evidence" value="ECO:0007669"/>
    <property type="project" value="UniProtKB-UniRule"/>
</dbReference>
<dbReference type="GO" id="GO:0016887">
    <property type="term" value="F:ATP hydrolysis activity"/>
    <property type="evidence" value="ECO:0007669"/>
    <property type="project" value="InterPro"/>
</dbReference>
<dbReference type="GO" id="GO:0046933">
    <property type="term" value="F:proton-transporting ATP synthase activity, rotational mechanism"/>
    <property type="evidence" value="ECO:0007669"/>
    <property type="project" value="UniProtKB-UniRule"/>
</dbReference>
<dbReference type="CDD" id="cd18110">
    <property type="entry name" value="ATP-synt_F1_beta_C"/>
    <property type="match status" value="1"/>
</dbReference>
<dbReference type="CDD" id="cd18115">
    <property type="entry name" value="ATP-synt_F1_beta_N"/>
    <property type="match status" value="1"/>
</dbReference>
<dbReference type="CDD" id="cd01133">
    <property type="entry name" value="F1-ATPase_beta_CD"/>
    <property type="match status" value="1"/>
</dbReference>
<dbReference type="FunFam" id="1.10.1140.10:FF:000001">
    <property type="entry name" value="ATP synthase subunit beta"/>
    <property type="match status" value="1"/>
</dbReference>
<dbReference type="FunFam" id="2.40.10.170:FF:000004">
    <property type="entry name" value="ATP synthase subunit beta"/>
    <property type="match status" value="1"/>
</dbReference>
<dbReference type="FunFam" id="3.40.50.300:FF:000026">
    <property type="entry name" value="ATP synthase subunit beta"/>
    <property type="match status" value="1"/>
</dbReference>
<dbReference type="Gene3D" id="2.40.10.170">
    <property type="match status" value="1"/>
</dbReference>
<dbReference type="Gene3D" id="1.10.1140.10">
    <property type="entry name" value="Bovine Mitochondrial F1-atpase, Atp Synthase Beta Chain, Chain D, domain 3"/>
    <property type="match status" value="1"/>
</dbReference>
<dbReference type="Gene3D" id="3.40.50.300">
    <property type="entry name" value="P-loop containing nucleotide triphosphate hydrolases"/>
    <property type="match status" value="1"/>
</dbReference>
<dbReference type="HAMAP" id="MF_01347">
    <property type="entry name" value="ATP_synth_beta_bact"/>
    <property type="match status" value="1"/>
</dbReference>
<dbReference type="InterPro" id="IPR003593">
    <property type="entry name" value="AAA+_ATPase"/>
</dbReference>
<dbReference type="InterPro" id="IPR055190">
    <property type="entry name" value="ATP-synt_VA_C"/>
</dbReference>
<dbReference type="InterPro" id="IPR005722">
    <property type="entry name" value="ATP_synth_F1_bsu"/>
</dbReference>
<dbReference type="InterPro" id="IPR020003">
    <property type="entry name" value="ATPase_a/bsu_AS"/>
</dbReference>
<dbReference type="InterPro" id="IPR050053">
    <property type="entry name" value="ATPase_alpha/beta_chains"/>
</dbReference>
<dbReference type="InterPro" id="IPR004100">
    <property type="entry name" value="ATPase_F1/V1/A1_a/bsu_N"/>
</dbReference>
<dbReference type="InterPro" id="IPR036121">
    <property type="entry name" value="ATPase_F1/V1/A1_a/bsu_N_sf"/>
</dbReference>
<dbReference type="InterPro" id="IPR000194">
    <property type="entry name" value="ATPase_F1/V1/A1_a/bsu_nucl-bd"/>
</dbReference>
<dbReference type="InterPro" id="IPR024034">
    <property type="entry name" value="ATPase_F1/V1_b/a_C"/>
</dbReference>
<dbReference type="InterPro" id="IPR027417">
    <property type="entry name" value="P-loop_NTPase"/>
</dbReference>
<dbReference type="NCBIfam" id="TIGR01039">
    <property type="entry name" value="atpD"/>
    <property type="match status" value="1"/>
</dbReference>
<dbReference type="PANTHER" id="PTHR15184">
    <property type="entry name" value="ATP SYNTHASE"/>
    <property type="match status" value="1"/>
</dbReference>
<dbReference type="PANTHER" id="PTHR15184:SF71">
    <property type="entry name" value="ATP SYNTHASE SUBUNIT BETA, MITOCHONDRIAL"/>
    <property type="match status" value="1"/>
</dbReference>
<dbReference type="Pfam" id="PF00006">
    <property type="entry name" value="ATP-synt_ab"/>
    <property type="match status" value="1"/>
</dbReference>
<dbReference type="Pfam" id="PF02874">
    <property type="entry name" value="ATP-synt_ab_N"/>
    <property type="match status" value="1"/>
</dbReference>
<dbReference type="Pfam" id="PF22919">
    <property type="entry name" value="ATP-synt_VA_C"/>
    <property type="match status" value="1"/>
</dbReference>
<dbReference type="PIRSF" id="PIRSF039072">
    <property type="entry name" value="ATPase_subunit_beta"/>
    <property type="match status" value="1"/>
</dbReference>
<dbReference type="SMART" id="SM00382">
    <property type="entry name" value="AAA"/>
    <property type="match status" value="1"/>
</dbReference>
<dbReference type="SUPFAM" id="SSF47917">
    <property type="entry name" value="C-terminal domain of alpha and beta subunits of F1 ATP synthase"/>
    <property type="match status" value="1"/>
</dbReference>
<dbReference type="SUPFAM" id="SSF50615">
    <property type="entry name" value="N-terminal domain of alpha and beta subunits of F1 ATP synthase"/>
    <property type="match status" value="1"/>
</dbReference>
<dbReference type="SUPFAM" id="SSF52540">
    <property type="entry name" value="P-loop containing nucleoside triphosphate hydrolases"/>
    <property type="match status" value="1"/>
</dbReference>
<dbReference type="PROSITE" id="PS00152">
    <property type="entry name" value="ATPASE_ALPHA_BETA"/>
    <property type="match status" value="1"/>
</dbReference>
<organism>
    <name type="scientific">Rhodopseudomonas palustris (strain BisA53)</name>
    <dbReference type="NCBI Taxonomy" id="316055"/>
    <lineage>
        <taxon>Bacteria</taxon>
        <taxon>Pseudomonadati</taxon>
        <taxon>Pseudomonadota</taxon>
        <taxon>Alphaproteobacteria</taxon>
        <taxon>Hyphomicrobiales</taxon>
        <taxon>Nitrobacteraceae</taxon>
        <taxon>Rhodopseudomonas</taxon>
    </lineage>
</organism>
<evidence type="ECO:0000255" key="1">
    <source>
        <dbReference type="HAMAP-Rule" id="MF_01347"/>
    </source>
</evidence>